<proteinExistence type="inferred from homology"/>
<sequence length="460" mass="50046">MANTLFDKIWDAHVVQKVEEGPTQLYIDRLYCHEVTSPQAFAGLRARGVKVFRPDHVYCMPDHNTPTHDQDKPIEDPVSKTQVDTLAKNAKDFGLAHFGMMDKRNGIIHVVGPERGLTLPGMTIVCGDSHTSTHGAMGAVAFGIGTSEVEMVLASQCILQSRPKTMRITIDGELGKGVTAKDMALYMMSKMTTSGATGFFVEYAGSAVRNLSMEGRLTLCNLSIEMGARGGMVAPDEVTFEYIKGREHAPKGVDWDKAVSHWKTLKSDDDAVFDKEIRFDAADIQPMITYGTNPGMGMGITEHIPVDDKSASFKKSLDYMGFQPGESLLGKKIDYVFLGACTNGRIEDFRAFTSLVRGKKKADHVTAWLVPGSWMVDAQIREEGLDKILEEAGFAIRQPGCSACLAMNDDKIPAGKYSVSTSNRNFEGRQGPGARTLLASPLVAAAAAVTGVITDPRELI</sequence>
<accession>A6L1V8</accession>
<gene>
    <name evidence="1" type="primary">leuC</name>
    <name type="ordered locus">BVU_2005</name>
</gene>
<evidence type="ECO:0000255" key="1">
    <source>
        <dbReference type="HAMAP-Rule" id="MF_01026"/>
    </source>
</evidence>
<reference key="1">
    <citation type="journal article" date="2007" name="PLoS Biol.">
        <title>Evolution of symbiotic bacteria in the distal human intestine.</title>
        <authorList>
            <person name="Xu J."/>
            <person name="Mahowald M.A."/>
            <person name="Ley R.E."/>
            <person name="Lozupone C.A."/>
            <person name="Hamady M."/>
            <person name="Martens E.C."/>
            <person name="Henrissat B."/>
            <person name="Coutinho P.M."/>
            <person name="Minx P."/>
            <person name="Latreille P."/>
            <person name="Cordum H."/>
            <person name="Van Brunt A."/>
            <person name="Kim K."/>
            <person name="Fulton R.S."/>
            <person name="Fulton L.A."/>
            <person name="Clifton S.W."/>
            <person name="Wilson R.K."/>
            <person name="Knight R.D."/>
            <person name="Gordon J.I."/>
        </authorList>
    </citation>
    <scope>NUCLEOTIDE SEQUENCE [LARGE SCALE GENOMIC DNA]</scope>
    <source>
        <strain>ATCC 8482 / DSM 1447 / JCM 5826 / CCUG 4940 / NBRC 14291 / NCTC 11154</strain>
    </source>
</reference>
<feature type="chain" id="PRO_0000319811" description="3-isopropylmalate dehydratase large subunit">
    <location>
        <begin position="1"/>
        <end position="460"/>
    </location>
</feature>
<feature type="binding site" evidence="1">
    <location>
        <position position="341"/>
    </location>
    <ligand>
        <name>[4Fe-4S] cluster</name>
        <dbReference type="ChEBI" id="CHEBI:49883"/>
    </ligand>
</feature>
<feature type="binding site" evidence="1">
    <location>
        <position position="401"/>
    </location>
    <ligand>
        <name>[4Fe-4S] cluster</name>
        <dbReference type="ChEBI" id="CHEBI:49883"/>
    </ligand>
</feature>
<feature type="binding site" evidence="1">
    <location>
        <position position="404"/>
    </location>
    <ligand>
        <name>[4Fe-4S] cluster</name>
        <dbReference type="ChEBI" id="CHEBI:49883"/>
    </ligand>
</feature>
<protein>
    <recommendedName>
        <fullName evidence="1">3-isopropylmalate dehydratase large subunit</fullName>
        <ecNumber evidence="1">4.2.1.33</ecNumber>
    </recommendedName>
    <alternativeName>
        <fullName evidence="1">Alpha-IPM isomerase</fullName>
        <shortName evidence="1">IPMI</shortName>
    </alternativeName>
    <alternativeName>
        <fullName evidence="1">Isopropylmalate isomerase</fullName>
    </alternativeName>
</protein>
<keyword id="KW-0004">4Fe-4S</keyword>
<keyword id="KW-0028">Amino-acid biosynthesis</keyword>
<keyword id="KW-0100">Branched-chain amino acid biosynthesis</keyword>
<keyword id="KW-0408">Iron</keyword>
<keyword id="KW-0411">Iron-sulfur</keyword>
<keyword id="KW-0432">Leucine biosynthesis</keyword>
<keyword id="KW-0456">Lyase</keyword>
<keyword id="KW-0479">Metal-binding</keyword>
<organism>
    <name type="scientific">Phocaeicola vulgatus (strain ATCC 8482 / DSM 1447 / JCM 5826 / CCUG 4940 / NBRC 14291 / NCTC 11154)</name>
    <name type="common">Bacteroides vulgatus</name>
    <dbReference type="NCBI Taxonomy" id="435590"/>
    <lineage>
        <taxon>Bacteria</taxon>
        <taxon>Pseudomonadati</taxon>
        <taxon>Bacteroidota</taxon>
        <taxon>Bacteroidia</taxon>
        <taxon>Bacteroidales</taxon>
        <taxon>Bacteroidaceae</taxon>
        <taxon>Phocaeicola</taxon>
    </lineage>
</organism>
<dbReference type="EC" id="4.2.1.33" evidence="1"/>
<dbReference type="EMBL" id="CP000139">
    <property type="protein sequence ID" value="ABR39672.1"/>
    <property type="molecule type" value="Genomic_DNA"/>
</dbReference>
<dbReference type="RefSeq" id="WP_005840840.1">
    <property type="nucleotide sequence ID" value="NZ_JANSWM010000072.1"/>
</dbReference>
<dbReference type="SMR" id="A6L1V8"/>
<dbReference type="STRING" id="435590.BVU_2005"/>
<dbReference type="PaxDb" id="435590-BVU_2005"/>
<dbReference type="DNASU" id="5302971"/>
<dbReference type="GeneID" id="5302971"/>
<dbReference type="KEGG" id="bvu:BVU_2005"/>
<dbReference type="eggNOG" id="COG0065">
    <property type="taxonomic scope" value="Bacteria"/>
</dbReference>
<dbReference type="HOGENOM" id="CLU_006714_3_4_10"/>
<dbReference type="BioCyc" id="BVUL435590:G1G59-2100-MONOMER"/>
<dbReference type="UniPathway" id="UPA00048">
    <property type="reaction ID" value="UER00071"/>
</dbReference>
<dbReference type="Proteomes" id="UP000002861">
    <property type="component" value="Chromosome"/>
</dbReference>
<dbReference type="GO" id="GO:0003861">
    <property type="term" value="F:3-isopropylmalate dehydratase activity"/>
    <property type="evidence" value="ECO:0007669"/>
    <property type="project" value="UniProtKB-UniRule"/>
</dbReference>
<dbReference type="GO" id="GO:0051539">
    <property type="term" value="F:4 iron, 4 sulfur cluster binding"/>
    <property type="evidence" value="ECO:0007669"/>
    <property type="project" value="UniProtKB-KW"/>
</dbReference>
<dbReference type="GO" id="GO:0046872">
    <property type="term" value="F:metal ion binding"/>
    <property type="evidence" value="ECO:0007669"/>
    <property type="project" value="UniProtKB-KW"/>
</dbReference>
<dbReference type="GO" id="GO:0009098">
    <property type="term" value="P:L-leucine biosynthetic process"/>
    <property type="evidence" value="ECO:0007669"/>
    <property type="project" value="UniProtKB-UniRule"/>
</dbReference>
<dbReference type="CDD" id="cd01583">
    <property type="entry name" value="IPMI"/>
    <property type="match status" value="1"/>
</dbReference>
<dbReference type="Gene3D" id="3.30.499.10">
    <property type="entry name" value="Aconitase, domain 3"/>
    <property type="match status" value="2"/>
</dbReference>
<dbReference type="HAMAP" id="MF_01026">
    <property type="entry name" value="LeuC_type1"/>
    <property type="match status" value="1"/>
</dbReference>
<dbReference type="InterPro" id="IPR004430">
    <property type="entry name" value="3-IsopropMal_deHydase_lsu"/>
</dbReference>
<dbReference type="InterPro" id="IPR015931">
    <property type="entry name" value="Acnase/IPM_dHydase_lsu_aba_1/3"/>
</dbReference>
<dbReference type="InterPro" id="IPR001030">
    <property type="entry name" value="Acoase/IPM_deHydtase_lsu_aba"/>
</dbReference>
<dbReference type="InterPro" id="IPR018136">
    <property type="entry name" value="Aconitase_4Fe-4S_BS"/>
</dbReference>
<dbReference type="InterPro" id="IPR036008">
    <property type="entry name" value="Aconitase_4Fe-4S_dom"/>
</dbReference>
<dbReference type="InterPro" id="IPR050067">
    <property type="entry name" value="IPM_dehydratase_rel_enz"/>
</dbReference>
<dbReference type="InterPro" id="IPR033941">
    <property type="entry name" value="IPMI_cat"/>
</dbReference>
<dbReference type="NCBIfam" id="TIGR00170">
    <property type="entry name" value="leuC"/>
    <property type="match status" value="1"/>
</dbReference>
<dbReference type="NCBIfam" id="NF004016">
    <property type="entry name" value="PRK05478.1"/>
    <property type="match status" value="1"/>
</dbReference>
<dbReference type="NCBIfam" id="NF009116">
    <property type="entry name" value="PRK12466.1"/>
    <property type="match status" value="1"/>
</dbReference>
<dbReference type="PANTHER" id="PTHR43822:SF9">
    <property type="entry name" value="3-ISOPROPYLMALATE DEHYDRATASE"/>
    <property type="match status" value="1"/>
</dbReference>
<dbReference type="PANTHER" id="PTHR43822">
    <property type="entry name" value="HOMOACONITASE, MITOCHONDRIAL-RELATED"/>
    <property type="match status" value="1"/>
</dbReference>
<dbReference type="Pfam" id="PF00330">
    <property type="entry name" value="Aconitase"/>
    <property type="match status" value="1"/>
</dbReference>
<dbReference type="PRINTS" id="PR00415">
    <property type="entry name" value="ACONITASE"/>
</dbReference>
<dbReference type="SUPFAM" id="SSF53732">
    <property type="entry name" value="Aconitase iron-sulfur domain"/>
    <property type="match status" value="1"/>
</dbReference>
<dbReference type="PROSITE" id="PS01244">
    <property type="entry name" value="ACONITASE_2"/>
    <property type="match status" value="1"/>
</dbReference>
<comment type="function">
    <text evidence="1">Catalyzes the isomerization between 2-isopropylmalate and 3-isopropylmalate, via the formation of 2-isopropylmaleate.</text>
</comment>
<comment type="catalytic activity">
    <reaction evidence="1">
        <text>(2R,3S)-3-isopropylmalate = (2S)-2-isopropylmalate</text>
        <dbReference type="Rhea" id="RHEA:32287"/>
        <dbReference type="ChEBI" id="CHEBI:1178"/>
        <dbReference type="ChEBI" id="CHEBI:35121"/>
        <dbReference type="EC" id="4.2.1.33"/>
    </reaction>
</comment>
<comment type="cofactor">
    <cofactor evidence="1">
        <name>[4Fe-4S] cluster</name>
        <dbReference type="ChEBI" id="CHEBI:49883"/>
    </cofactor>
    <text evidence="1">Binds 1 [4Fe-4S] cluster per subunit.</text>
</comment>
<comment type="pathway">
    <text evidence="1">Amino-acid biosynthesis; L-leucine biosynthesis; L-leucine from 3-methyl-2-oxobutanoate: step 2/4.</text>
</comment>
<comment type="subunit">
    <text evidence="1">Heterodimer of LeuC and LeuD.</text>
</comment>
<comment type="similarity">
    <text evidence="1">Belongs to the aconitase/IPM isomerase family. LeuC type 1 subfamily.</text>
</comment>
<name>LEUC_PHOV8</name>